<protein>
    <recommendedName>
        <fullName>Nuclear transition protein 2</fullName>
        <shortName>TP-2</shortName>
        <shortName>TP2</shortName>
    </recommendedName>
</protein>
<name>STP2_GORGO</name>
<comment type="function">
    <text evidence="2">Plays a key role in the replacement of histones to protamine in the elongating spermatids of mammals. In condensing spermatids, loaded onto the nucleosomes, where it promotes the recruitment and processing of protamines, which are responsible for histone eviction.</text>
</comment>
<comment type="subcellular location">
    <subcellularLocation>
        <location evidence="1">Nucleus</location>
    </subcellularLocation>
    <subcellularLocation>
        <location evidence="1">Nucleus</location>
        <location evidence="1">Nucleolus</location>
    </subcellularLocation>
    <subcellularLocation>
        <location evidence="1">Chromosome</location>
    </subcellularLocation>
    <text evidence="1 2">Loaded onto the nucleosomes of condensing spermatids (By similarity). Nuclear import is mediated by IPO4. Nucleolar localization requires the protein to be phosphorylated (By similarity).</text>
</comment>
<comment type="tissue specificity">
    <text>Testis.</text>
</comment>
<comment type="similarity">
    <text evidence="4">Belongs to the nuclear transition protein 2 family.</text>
</comment>
<sequence>MDTKTHSLPITHTQLHSNSQPQSRTCTRHCQTFSQSCRQSHRGSRSRSSSQSPASHRNPTGAHSSSGHQSQSPNTSPPPKRHKKTMNSHHSPRRPTILHCSCPKNRKNLEGKLKKKKMAKRIQQVYKTKTRSS</sequence>
<gene>
    <name type="primary">TNP2</name>
</gene>
<accession>Q9N1A5</accession>
<organism>
    <name type="scientific">Gorilla gorilla gorilla</name>
    <name type="common">Western lowland gorilla</name>
    <dbReference type="NCBI Taxonomy" id="9595"/>
    <lineage>
        <taxon>Eukaryota</taxon>
        <taxon>Metazoa</taxon>
        <taxon>Chordata</taxon>
        <taxon>Craniata</taxon>
        <taxon>Vertebrata</taxon>
        <taxon>Euteleostomi</taxon>
        <taxon>Mammalia</taxon>
        <taxon>Eutheria</taxon>
        <taxon>Euarchontoglires</taxon>
        <taxon>Primates</taxon>
        <taxon>Haplorrhini</taxon>
        <taxon>Catarrhini</taxon>
        <taxon>Hominidae</taxon>
        <taxon>Gorilla</taxon>
    </lineage>
</organism>
<reference key="1">
    <citation type="journal article" date="2000" name="Nature">
        <title>Rapid evolution of male reproductive genes in the descent of man.</title>
        <authorList>
            <person name="Wyckoff G.J."/>
            <person name="Wang W."/>
            <person name="Wu C.-I."/>
        </authorList>
    </citation>
    <scope>NUCLEOTIDE SEQUENCE [GENOMIC DNA]</scope>
</reference>
<feature type="chain" id="PRO_0000191424" description="Nuclear transition protein 2">
    <location>
        <begin position="1"/>
        <end position="133" status="greater than"/>
    </location>
</feature>
<feature type="region of interest" description="Disordered" evidence="3">
    <location>
        <begin position="1"/>
        <end position="133"/>
    </location>
</feature>
<feature type="short sequence motif" description="Nuclear localization signal" evidence="1">
    <location>
        <begin position="111"/>
        <end position="119"/>
    </location>
</feature>
<feature type="compositionally biased region" description="Polar residues" evidence="3">
    <location>
        <begin position="1"/>
        <end position="33"/>
    </location>
</feature>
<feature type="compositionally biased region" description="Low complexity" evidence="3">
    <location>
        <begin position="46"/>
        <end position="72"/>
    </location>
</feature>
<feature type="compositionally biased region" description="Basic residues" evidence="3">
    <location>
        <begin position="79"/>
        <end position="93"/>
    </location>
</feature>
<feature type="binding site" evidence="1">
    <location>
        <position position="12"/>
    </location>
    <ligand>
        <name>Zn(2+)</name>
        <dbReference type="ChEBI" id="CHEBI:29105"/>
    </ligand>
</feature>
<feature type="binding site" evidence="1">
    <location>
        <position position="16"/>
    </location>
    <ligand>
        <name>Zn(2+)</name>
        <dbReference type="ChEBI" id="CHEBI:29105"/>
    </ligand>
</feature>
<feature type="binding site" evidence="1">
    <location>
        <position position="26"/>
    </location>
    <ligand>
        <name>Zn(2+)</name>
        <dbReference type="ChEBI" id="CHEBI:29105"/>
    </ligand>
</feature>
<feature type="binding site" evidence="1">
    <location>
        <position position="30"/>
    </location>
    <ligand>
        <name>Zn(2+)</name>
        <dbReference type="ChEBI" id="CHEBI:29105"/>
    </ligand>
</feature>
<feature type="modified residue" description="Phosphoserine" evidence="1">
    <location>
        <position position="133"/>
    </location>
</feature>
<feature type="non-terminal residue">
    <location>
        <position position="133"/>
    </location>
</feature>
<proteinExistence type="evidence at transcript level"/>
<evidence type="ECO:0000250" key="1">
    <source>
        <dbReference type="UniProtKB" id="P11101"/>
    </source>
</evidence>
<evidence type="ECO:0000250" key="2">
    <source>
        <dbReference type="UniProtKB" id="P11378"/>
    </source>
</evidence>
<evidence type="ECO:0000256" key="3">
    <source>
        <dbReference type="SAM" id="MobiDB-lite"/>
    </source>
</evidence>
<evidence type="ECO:0000305" key="4"/>
<dbReference type="EMBL" id="AF215718">
    <property type="protein sequence ID" value="AAF35857.1"/>
    <property type="molecule type" value="Genomic_DNA"/>
</dbReference>
<dbReference type="FunCoup" id="Q9N1A5">
    <property type="interactions" value="2"/>
</dbReference>
<dbReference type="STRING" id="9593.ENSGGOP00000023058"/>
<dbReference type="eggNOG" id="KOG4566">
    <property type="taxonomic scope" value="Eukaryota"/>
</dbReference>
<dbReference type="HOGENOM" id="CLU_152028_0_0_1"/>
<dbReference type="InParanoid" id="Q9N1A5"/>
<dbReference type="Proteomes" id="UP000001519">
    <property type="component" value="Unplaced"/>
</dbReference>
<dbReference type="GO" id="GO:0005730">
    <property type="term" value="C:nucleolus"/>
    <property type="evidence" value="ECO:0007669"/>
    <property type="project" value="UniProtKB-SubCell"/>
</dbReference>
<dbReference type="GO" id="GO:0000786">
    <property type="term" value="C:nucleosome"/>
    <property type="evidence" value="ECO:0000250"/>
    <property type="project" value="UniProtKB"/>
</dbReference>
<dbReference type="GO" id="GO:0003677">
    <property type="term" value="F:DNA binding"/>
    <property type="evidence" value="ECO:0007669"/>
    <property type="project" value="UniProtKB-KW"/>
</dbReference>
<dbReference type="GO" id="GO:0008270">
    <property type="term" value="F:zinc ion binding"/>
    <property type="evidence" value="ECO:0000318"/>
    <property type="project" value="GO_Central"/>
</dbReference>
<dbReference type="GO" id="GO:0007340">
    <property type="term" value="P:acrosome reaction"/>
    <property type="evidence" value="ECO:0000318"/>
    <property type="project" value="GO_Central"/>
</dbReference>
<dbReference type="GO" id="GO:0007341">
    <property type="term" value="P:penetration of zona pellucida"/>
    <property type="evidence" value="ECO:0000318"/>
    <property type="project" value="GO_Central"/>
</dbReference>
<dbReference type="GO" id="GO:0010954">
    <property type="term" value="P:positive regulation of protein processing"/>
    <property type="evidence" value="ECO:0000250"/>
    <property type="project" value="UniProtKB"/>
</dbReference>
<dbReference type="GO" id="GO:0035092">
    <property type="term" value="P:sperm DNA condensation"/>
    <property type="evidence" value="ECO:0000250"/>
    <property type="project" value="UniProtKB"/>
</dbReference>
<dbReference type="GO" id="GO:0007283">
    <property type="term" value="P:spermatogenesis"/>
    <property type="evidence" value="ECO:0000318"/>
    <property type="project" value="GO_Central"/>
</dbReference>
<dbReference type="InterPro" id="IPR000678">
    <property type="entry name" value="TP2"/>
</dbReference>
<dbReference type="PANTHER" id="PTHR17488">
    <property type="entry name" value="NUCLEAR TRANSITION PROTEIN 2"/>
    <property type="match status" value="1"/>
</dbReference>
<dbReference type="PANTHER" id="PTHR17488:SF0">
    <property type="entry name" value="NUCLEAR TRANSITION PROTEIN 2"/>
    <property type="match status" value="1"/>
</dbReference>
<dbReference type="Pfam" id="PF01254">
    <property type="entry name" value="TP2"/>
    <property type="match status" value="1"/>
</dbReference>
<dbReference type="PROSITE" id="PS00970">
    <property type="entry name" value="TP2_1"/>
    <property type="match status" value="1"/>
</dbReference>
<dbReference type="PROSITE" id="PS00971">
    <property type="entry name" value="TP2_2"/>
    <property type="match status" value="1"/>
</dbReference>
<keyword id="KW-0158">Chromosome</keyword>
<keyword id="KW-0217">Developmental protein</keyword>
<keyword id="KW-0221">Differentiation</keyword>
<keyword id="KW-0238">DNA-binding</keyword>
<keyword id="KW-0479">Metal-binding</keyword>
<keyword id="KW-0544">Nucleosome core</keyword>
<keyword id="KW-0539">Nucleus</keyword>
<keyword id="KW-0597">Phosphoprotein</keyword>
<keyword id="KW-1185">Reference proteome</keyword>
<keyword id="KW-0744">Spermatogenesis</keyword>
<keyword id="KW-0862">Zinc</keyword>